<sequence>MESPSAHAVSLPEDEELQPWGGAGGPGQHPGRPRSTECAHPGVVEKVRPKWDNPLQFLLVCISYAVGLGNVWRFPYLCQMYGGGNFLVPYIIMLIVEGMPLLYLELAVGQRMRQGSIGAWRTISPYLSGVGIASLVVSFLASVYFNVINTWALWYLFHSFQDPLPWSVCPLNSNHTGYDEECEKASSTQYFWYRKTLNISPSIQENGGVQWEPALCLTLAWLMVYLCILRGTESTGKVVYFTTSLPYFVLIIYLVRGLTLHGATNGLAYMFTPKIEQLANPKAWINAATQIFFSLGLGCGGLIAFASYNEPSNDCQKHALIVSVINSTTAIFSSIVTFSIYGFKATFNYENCLNKVILLLTNSFDLEDGFLTVSNLEEVKNYLASTYPNKYSEVFPHIRNCSLESELDTAVQGTGLAFIVYTEAIKNMEVSQLWSVLYFFMLLTLGMGSMVGTGTAILTPLTDSKIISSYLPKEAISGLVCLLNCAIGMVFTMEAGNYWFDLFNDYTATLSLLLIVLVETIAVCYVYGLKRFESDLRAMTGRTLSWYWKVMWAFVSPLLIVGLFIFYLSDYILTGTLQYQAWDATQGHVVTKDYPTYALAVIGLLVASSTMCIPLVALGTFVTRHFKIREQFSAA</sequence>
<comment type="function">
    <text evidence="3">Does not show transporter activity with a range of tested amino acids including proline, glutamine, glutamic acid, leucine, alanine, histidine, glycine and arginine.</text>
</comment>
<comment type="subunit">
    <text evidence="5">Interacts with CLTRN.</text>
</comment>
<comment type="subcellular location">
    <subcellularLocation>
        <location evidence="4">Apical cell membrane</location>
        <topology evidence="4">Multi-pass membrane protein</topology>
    </subcellularLocation>
    <text>Located in the apical brush border membrane of kidney proximal tubule cells.</text>
</comment>
<comment type="tissue specificity">
    <text evidence="3 6">Detected only in kidney and lung.</text>
</comment>
<comment type="similarity">
    <text evidence="7">Belongs to the sodium:neurotransmitter symporter (SNF) (TC 2.A.22) family. SLC6A20 subfamily.</text>
</comment>
<name>S620B_MOUSE</name>
<organism>
    <name type="scientific">Mus musculus</name>
    <name type="common">Mouse</name>
    <dbReference type="NCBI Taxonomy" id="10090"/>
    <lineage>
        <taxon>Eukaryota</taxon>
        <taxon>Metazoa</taxon>
        <taxon>Chordata</taxon>
        <taxon>Craniata</taxon>
        <taxon>Vertebrata</taxon>
        <taxon>Euteleostomi</taxon>
        <taxon>Mammalia</taxon>
        <taxon>Eutheria</taxon>
        <taxon>Euarchontoglires</taxon>
        <taxon>Glires</taxon>
        <taxon>Rodentia</taxon>
        <taxon>Myomorpha</taxon>
        <taxon>Muroidea</taxon>
        <taxon>Muridae</taxon>
        <taxon>Murinae</taxon>
        <taxon>Mus</taxon>
        <taxon>Mus</taxon>
    </lineage>
</organism>
<protein>
    <recommendedName>
        <fullName>Sodium- and chloride-dependent transporter XTRP3B</fullName>
    </recommendedName>
    <alternativeName>
        <fullName>IMINO-K</fullName>
    </alternativeName>
    <alternativeName>
        <fullName>Solute carrier family 6 member 20B</fullName>
    </alternativeName>
</protein>
<keyword id="KW-1003">Cell membrane</keyword>
<keyword id="KW-0325">Glycoprotein</keyword>
<keyword id="KW-0472">Membrane</keyword>
<keyword id="KW-1185">Reference proteome</keyword>
<keyword id="KW-0769">Symport</keyword>
<keyword id="KW-0812">Transmembrane</keyword>
<keyword id="KW-1133">Transmembrane helix</keyword>
<keyword id="KW-0813">Transport</keyword>
<evidence type="ECO:0000255" key="1"/>
<evidence type="ECO:0000256" key="2">
    <source>
        <dbReference type="SAM" id="MobiDB-lite"/>
    </source>
</evidence>
<evidence type="ECO:0000269" key="3">
    <source>
    </source>
</evidence>
<evidence type="ECO:0000269" key="4">
    <source>
    </source>
</evidence>
<evidence type="ECO:0000269" key="5">
    <source>
    </source>
</evidence>
<evidence type="ECO:0000269" key="6">
    <source>
    </source>
</evidence>
<evidence type="ECO:0000305" key="7"/>
<proteinExistence type="evidence at protein level"/>
<dbReference type="EMBL" id="AF075261">
    <property type="protein sequence ID" value="AAC27756.1"/>
    <property type="molecule type" value="mRNA"/>
</dbReference>
<dbReference type="EMBL" id="AK144038">
    <property type="protein sequence ID" value="BAE25668.1"/>
    <property type="molecule type" value="mRNA"/>
</dbReference>
<dbReference type="EMBL" id="AK164706">
    <property type="protein sequence ID" value="BAE37885.1"/>
    <property type="molecule type" value="mRNA"/>
</dbReference>
<dbReference type="EMBL" id="AC132852">
    <property type="status" value="NOT_ANNOTATED_CDS"/>
    <property type="molecule type" value="Genomic_DNA"/>
</dbReference>
<dbReference type="EMBL" id="BC013484">
    <property type="protein sequence ID" value="AAH13484.1"/>
    <property type="molecule type" value="mRNA"/>
</dbReference>
<dbReference type="CCDS" id="CCDS23661.1"/>
<dbReference type="RefSeq" id="NP_035861.2">
    <property type="nucleotide sequence ID" value="NM_011731.3"/>
</dbReference>
<dbReference type="SMR" id="O88575"/>
<dbReference type="DIP" id="DIP-60422N"/>
<dbReference type="FunCoup" id="O88575">
    <property type="interactions" value="11"/>
</dbReference>
<dbReference type="IntAct" id="O88575">
    <property type="interactions" value="1"/>
</dbReference>
<dbReference type="STRING" id="10090.ENSMUSP00000026273"/>
<dbReference type="GlyCosmos" id="O88575">
    <property type="glycosylation" value="2 sites, No reported glycans"/>
</dbReference>
<dbReference type="GlyGen" id="O88575">
    <property type="glycosylation" value="2 sites"/>
</dbReference>
<dbReference type="iPTMnet" id="O88575"/>
<dbReference type="PhosphoSitePlus" id="O88575"/>
<dbReference type="jPOST" id="O88575"/>
<dbReference type="PaxDb" id="10090-ENSMUSP00000026273"/>
<dbReference type="ProteomicsDB" id="256907"/>
<dbReference type="DNASU" id="22599"/>
<dbReference type="GeneID" id="22599"/>
<dbReference type="KEGG" id="mmu:22599"/>
<dbReference type="UCSC" id="uc009sgi.2">
    <property type="organism name" value="mouse"/>
</dbReference>
<dbReference type="AGR" id="MGI:1336891"/>
<dbReference type="CTD" id="22599"/>
<dbReference type="MGI" id="MGI:1336891">
    <property type="gene designation" value="Slc6a20b"/>
</dbReference>
<dbReference type="VEuPathDB" id="HostDB:ENSMUSG00000025243"/>
<dbReference type="eggNOG" id="KOG3659">
    <property type="taxonomic scope" value="Eukaryota"/>
</dbReference>
<dbReference type="HOGENOM" id="CLU_006855_7_2_1"/>
<dbReference type="InParanoid" id="O88575"/>
<dbReference type="OrthoDB" id="6581954at2759"/>
<dbReference type="PhylomeDB" id="O88575"/>
<dbReference type="TreeFam" id="TF343812"/>
<dbReference type="BioGRID-ORCS" id="22599">
    <property type="hits" value="3 hits in 77 CRISPR screens"/>
</dbReference>
<dbReference type="ChiTaRS" id="Slc6a20b">
    <property type="organism name" value="mouse"/>
</dbReference>
<dbReference type="PRO" id="PR:O88575"/>
<dbReference type="Proteomes" id="UP000000589">
    <property type="component" value="Chromosome 9"/>
</dbReference>
<dbReference type="RNAct" id="O88575">
    <property type="molecule type" value="protein"/>
</dbReference>
<dbReference type="ExpressionAtlas" id="O88575">
    <property type="expression patterns" value="baseline and differential"/>
</dbReference>
<dbReference type="GO" id="GO:0016324">
    <property type="term" value="C:apical plasma membrane"/>
    <property type="evidence" value="ECO:0000314"/>
    <property type="project" value="UniProtKB"/>
</dbReference>
<dbReference type="GO" id="GO:0031526">
    <property type="term" value="C:brush border membrane"/>
    <property type="evidence" value="ECO:0000314"/>
    <property type="project" value="MGI"/>
</dbReference>
<dbReference type="GO" id="GO:0005886">
    <property type="term" value="C:plasma membrane"/>
    <property type="evidence" value="ECO:0000314"/>
    <property type="project" value="MGI"/>
</dbReference>
<dbReference type="GO" id="GO:0015293">
    <property type="term" value="F:symporter activity"/>
    <property type="evidence" value="ECO:0007669"/>
    <property type="project" value="UniProtKB-KW"/>
</dbReference>
<dbReference type="InterPro" id="IPR000175">
    <property type="entry name" value="Na/ntran_symport"/>
</dbReference>
<dbReference type="InterPro" id="IPR002438">
    <property type="entry name" value="Neutral_aa_SLC6"/>
</dbReference>
<dbReference type="InterPro" id="IPR037272">
    <property type="entry name" value="SNS_sf"/>
</dbReference>
<dbReference type="PANTHER" id="PTHR11616:SF44">
    <property type="entry name" value="SODIUM- AND CHLORIDE-DEPENDENT TRANSPORTER XTRP3"/>
    <property type="match status" value="1"/>
</dbReference>
<dbReference type="PANTHER" id="PTHR11616">
    <property type="entry name" value="SODIUM/CHLORIDE DEPENDENT TRANSPORTER"/>
    <property type="match status" value="1"/>
</dbReference>
<dbReference type="Pfam" id="PF00209">
    <property type="entry name" value="SNF"/>
    <property type="match status" value="1"/>
</dbReference>
<dbReference type="PRINTS" id="PR00176">
    <property type="entry name" value="NANEUSMPORT"/>
</dbReference>
<dbReference type="PRINTS" id="PR01206">
    <property type="entry name" value="ORPHTRNSPORT"/>
</dbReference>
<dbReference type="SUPFAM" id="SSF161070">
    <property type="entry name" value="SNF-like"/>
    <property type="match status" value="1"/>
</dbReference>
<dbReference type="PROSITE" id="PS00610">
    <property type="entry name" value="NA_NEUROTRAN_SYMP_1"/>
    <property type="match status" value="1"/>
</dbReference>
<dbReference type="PROSITE" id="PS00754">
    <property type="entry name" value="NA_NEUROTRAN_SYMP_2"/>
    <property type="match status" value="1"/>
</dbReference>
<dbReference type="PROSITE" id="PS50267">
    <property type="entry name" value="NA_NEUROTRAN_SYMP_3"/>
    <property type="match status" value="1"/>
</dbReference>
<gene>
    <name type="primary">Slc6a20b</name>
    <name type="synonym">Slc6a20</name>
    <name type="synonym">Xt3</name>
    <name type="synonym">Xtrp3</name>
</gene>
<accession>O88575</accession>
<accession>E9QNK3</accession>
<accession>Q3TP52</accession>
<accession>Q91WT6</accession>
<reference key="1">
    <citation type="journal article" date="1998" name="Recept. Channels">
        <title>Cloning, gene structure, and genomic localization of an orphan transporter from mouse kidney with six alternatively-spliced isoforms.</title>
        <authorList>
            <person name="Nash S.R."/>
            <person name="Giros B."/>
            <person name="Kingsmore S.F."/>
            <person name="Kim K.M."/>
            <person name="El-Mestikawy S."/>
            <person name="Dong Q."/>
            <person name="Fumagalli F."/>
            <person name="Seldin M.F."/>
            <person name="Caron M.G."/>
        </authorList>
    </citation>
    <scope>NUCLEOTIDE SEQUENCE [MRNA]</scope>
    <scope>TISSUE SPECIFICITY</scope>
    <source>
        <tissue>Kidney</tissue>
    </source>
</reference>
<reference key="2">
    <citation type="journal article" date="2005" name="Science">
        <title>The transcriptional landscape of the mammalian genome.</title>
        <authorList>
            <person name="Carninci P."/>
            <person name="Kasukawa T."/>
            <person name="Katayama S."/>
            <person name="Gough J."/>
            <person name="Frith M.C."/>
            <person name="Maeda N."/>
            <person name="Oyama R."/>
            <person name="Ravasi T."/>
            <person name="Lenhard B."/>
            <person name="Wells C."/>
            <person name="Kodzius R."/>
            <person name="Shimokawa K."/>
            <person name="Bajic V.B."/>
            <person name="Brenner S.E."/>
            <person name="Batalov S."/>
            <person name="Forrest A.R."/>
            <person name="Zavolan M."/>
            <person name="Davis M.J."/>
            <person name="Wilming L.G."/>
            <person name="Aidinis V."/>
            <person name="Allen J.E."/>
            <person name="Ambesi-Impiombato A."/>
            <person name="Apweiler R."/>
            <person name="Aturaliya R.N."/>
            <person name="Bailey T.L."/>
            <person name="Bansal M."/>
            <person name="Baxter L."/>
            <person name="Beisel K.W."/>
            <person name="Bersano T."/>
            <person name="Bono H."/>
            <person name="Chalk A.M."/>
            <person name="Chiu K.P."/>
            <person name="Choudhary V."/>
            <person name="Christoffels A."/>
            <person name="Clutterbuck D.R."/>
            <person name="Crowe M.L."/>
            <person name="Dalla E."/>
            <person name="Dalrymple B.P."/>
            <person name="de Bono B."/>
            <person name="Della Gatta G."/>
            <person name="di Bernardo D."/>
            <person name="Down T."/>
            <person name="Engstrom P."/>
            <person name="Fagiolini M."/>
            <person name="Faulkner G."/>
            <person name="Fletcher C.F."/>
            <person name="Fukushima T."/>
            <person name="Furuno M."/>
            <person name="Futaki S."/>
            <person name="Gariboldi M."/>
            <person name="Georgii-Hemming P."/>
            <person name="Gingeras T.R."/>
            <person name="Gojobori T."/>
            <person name="Green R.E."/>
            <person name="Gustincich S."/>
            <person name="Harbers M."/>
            <person name="Hayashi Y."/>
            <person name="Hensch T.K."/>
            <person name="Hirokawa N."/>
            <person name="Hill D."/>
            <person name="Huminiecki L."/>
            <person name="Iacono M."/>
            <person name="Ikeo K."/>
            <person name="Iwama A."/>
            <person name="Ishikawa T."/>
            <person name="Jakt M."/>
            <person name="Kanapin A."/>
            <person name="Katoh M."/>
            <person name="Kawasawa Y."/>
            <person name="Kelso J."/>
            <person name="Kitamura H."/>
            <person name="Kitano H."/>
            <person name="Kollias G."/>
            <person name="Krishnan S.P."/>
            <person name="Kruger A."/>
            <person name="Kummerfeld S.K."/>
            <person name="Kurochkin I.V."/>
            <person name="Lareau L.F."/>
            <person name="Lazarevic D."/>
            <person name="Lipovich L."/>
            <person name="Liu J."/>
            <person name="Liuni S."/>
            <person name="McWilliam S."/>
            <person name="Madan Babu M."/>
            <person name="Madera M."/>
            <person name="Marchionni L."/>
            <person name="Matsuda H."/>
            <person name="Matsuzawa S."/>
            <person name="Miki H."/>
            <person name="Mignone F."/>
            <person name="Miyake S."/>
            <person name="Morris K."/>
            <person name="Mottagui-Tabar S."/>
            <person name="Mulder N."/>
            <person name="Nakano N."/>
            <person name="Nakauchi H."/>
            <person name="Ng P."/>
            <person name="Nilsson R."/>
            <person name="Nishiguchi S."/>
            <person name="Nishikawa S."/>
            <person name="Nori F."/>
            <person name="Ohara O."/>
            <person name="Okazaki Y."/>
            <person name="Orlando V."/>
            <person name="Pang K.C."/>
            <person name="Pavan W.J."/>
            <person name="Pavesi G."/>
            <person name="Pesole G."/>
            <person name="Petrovsky N."/>
            <person name="Piazza S."/>
            <person name="Reed J."/>
            <person name="Reid J.F."/>
            <person name="Ring B.Z."/>
            <person name="Ringwald M."/>
            <person name="Rost B."/>
            <person name="Ruan Y."/>
            <person name="Salzberg S.L."/>
            <person name="Sandelin A."/>
            <person name="Schneider C."/>
            <person name="Schoenbach C."/>
            <person name="Sekiguchi K."/>
            <person name="Semple C.A."/>
            <person name="Seno S."/>
            <person name="Sessa L."/>
            <person name="Sheng Y."/>
            <person name="Shibata Y."/>
            <person name="Shimada H."/>
            <person name="Shimada K."/>
            <person name="Silva D."/>
            <person name="Sinclair B."/>
            <person name="Sperling S."/>
            <person name="Stupka E."/>
            <person name="Sugiura K."/>
            <person name="Sultana R."/>
            <person name="Takenaka Y."/>
            <person name="Taki K."/>
            <person name="Tammoja K."/>
            <person name="Tan S.L."/>
            <person name="Tang S."/>
            <person name="Taylor M.S."/>
            <person name="Tegner J."/>
            <person name="Teichmann S.A."/>
            <person name="Ueda H.R."/>
            <person name="van Nimwegen E."/>
            <person name="Verardo R."/>
            <person name="Wei C.L."/>
            <person name="Yagi K."/>
            <person name="Yamanishi H."/>
            <person name="Zabarovsky E."/>
            <person name="Zhu S."/>
            <person name="Zimmer A."/>
            <person name="Hide W."/>
            <person name="Bult C."/>
            <person name="Grimmond S.M."/>
            <person name="Teasdale R.D."/>
            <person name="Liu E.T."/>
            <person name="Brusic V."/>
            <person name="Quackenbush J."/>
            <person name="Wahlestedt C."/>
            <person name="Mattick J.S."/>
            <person name="Hume D.A."/>
            <person name="Kai C."/>
            <person name="Sasaki D."/>
            <person name="Tomaru Y."/>
            <person name="Fukuda S."/>
            <person name="Kanamori-Katayama M."/>
            <person name="Suzuki M."/>
            <person name="Aoki J."/>
            <person name="Arakawa T."/>
            <person name="Iida J."/>
            <person name="Imamura K."/>
            <person name="Itoh M."/>
            <person name="Kato T."/>
            <person name="Kawaji H."/>
            <person name="Kawagashira N."/>
            <person name="Kawashima T."/>
            <person name="Kojima M."/>
            <person name="Kondo S."/>
            <person name="Konno H."/>
            <person name="Nakano K."/>
            <person name="Ninomiya N."/>
            <person name="Nishio T."/>
            <person name="Okada M."/>
            <person name="Plessy C."/>
            <person name="Shibata K."/>
            <person name="Shiraki T."/>
            <person name="Suzuki S."/>
            <person name="Tagami M."/>
            <person name="Waki K."/>
            <person name="Watahiki A."/>
            <person name="Okamura-Oho Y."/>
            <person name="Suzuki H."/>
            <person name="Kawai J."/>
            <person name="Hayashizaki Y."/>
        </authorList>
    </citation>
    <scope>NUCLEOTIDE SEQUENCE [LARGE SCALE MRNA]</scope>
    <source>
        <strain>C57BL/6J</strain>
        <tissue>Kidney</tissue>
    </source>
</reference>
<reference key="3">
    <citation type="journal article" date="2009" name="PLoS Biol.">
        <title>Lineage-specific biology revealed by a finished genome assembly of the mouse.</title>
        <authorList>
            <person name="Church D.M."/>
            <person name="Goodstadt L."/>
            <person name="Hillier L.W."/>
            <person name="Zody M.C."/>
            <person name="Goldstein S."/>
            <person name="She X."/>
            <person name="Bult C.J."/>
            <person name="Agarwala R."/>
            <person name="Cherry J.L."/>
            <person name="DiCuccio M."/>
            <person name="Hlavina W."/>
            <person name="Kapustin Y."/>
            <person name="Meric P."/>
            <person name="Maglott D."/>
            <person name="Birtle Z."/>
            <person name="Marques A.C."/>
            <person name="Graves T."/>
            <person name="Zhou S."/>
            <person name="Teague B."/>
            <person name="Potamousis K."/>
            <person name="Churas C."/>
            <person name="Place M."/>
            <person name="Herschleb J."/>
            <person name="Runnheim R."/>
            <person name="Forrest D."/>
            <person name="Amos-Landgraf J."/>
            <person name="Schwartz D.C."/>
            <person name="Cheng Z."/>
            <person name="Lindblad-Toh K."/>
            <person name="Eichler E.E."/>
            <person name="Ponting C.P."/>
        </authorList>
    </citation>
    <scope>NUCLEOTIDE SEQUENCE [LARGE SCALE GENOMIC DNA]</scope>
    <source>
        <strain>C57BL/6J</strain>
    </source>
</reference>
<reference key="4">
    <citation type="journal article" date="2004" name="Genome Res.">
        <title>The status, quality, and expansion of the NIH full-length cDNA project: the Mammalian Gene Collection (MGC).</title>
        <authorList>
            <consortium name="The MGC Project Team"/>
        </authorList>
    </citation>
    <scope>NUCLEOTIDE SEQUENCE [LARGE SCALE MRNA]</scope>
    <source>
        <strain>FVB/N</strain>
        <tissue>Kidney</tissue>
    </source>
</reference>
<reference key="5">
    <citation type="journal article" date="2005" name="Biochem. J.">
        <title>Molecular cloning of the mouse IMINO system: an Na(+)- and Cl(-)-dependent proline transporter.</title>
        <authorList>
            <person name="Kowalczuk S."/>
            <person name="Broeer A."/>
            <person name="Munzinger M."/>
            <person name="Tietze N."/>
            <person name="Klingel K."/>
            <person name="Broeer S."/>
        </authorList>
    </citation>
    <scope>FUNCTION</scope>
    <scope>TISSUE SPECIFICITY</scope>
</reference>
<reference key="6">
    <citation type="journal article" date="2006" name="Am. J. Physiol.">
        <title>Luminal kidney and intestine SLC6 amino acid transporters of B0AT-cluster and their tissue distribution in Mus musculus.</title>
        <authorList>
            <person name="Romeo E."/>
            <person name="Dave M.H."/>
            <person name="Bacic D."/>
            <person name="Ristic Z."/>
            <person name="Camargo S.M.R."/>
            <person name="Loffing J."/>
            <person name="Wagner C.A."/>
            <person name="Verrey F."/>
        </authorList>
    </citation>
    <scope>SUBCELLULAR LOCATION</scope>
</reference>
<reference key="7">
    <citation type="journal article" date="2006" name="Nature">
        <title>Essential role for collectrin in renal amino acid transport.</title>
        <authorList>
            <person name="Danilczyk U."/>
            <person name="Sarao R."/>
            <person name="Remy C."/>
            <person name="Benabbas C."/>
            <person name="Stange G."/>
            <person name="Richter A."/>
            <person name="Arya S."/>
            <person name="Pospisilik J.A."/>
            <person name="Singer D."/>
            <person name="Camargo S.M."/>
            <person name="Makrides V."/>
            <person name="Ramadan T."/>
            <person name="Verrey F."/>
            <person name="Wagner C.A."/>
            <person name="Penninger J.M."/>
        </authorList>
    </citation>
    <scope>INTERACTION WITH CLTRN</scope>
</reference>
<reference key="8">
    <citation type="journal article" date="2010" name="Cell">
        <title>A tissue-specific atlas of mouse protein phosphorylation and expression.</title>
        <authorList>
            <person name="Huttlin E.L."/>
            <person name="Jedrychowski M.P."/>
            <person name="Elias J.E."/>
            <person name="Goswami T."/>
            <person name="Rad R."/>
            <person name="Beausoleil S.A."/>
            <person name="Villen J."/>
            <person name="Haas W."/>
            <person name="Sowa M.E."/>
            <person name="Gygi S.P."/>
        </authorList>
    </citation>
    <scope>IDENTIFICATION BY MASS SPECTROMETRY [LARGE SCALE ANALYSIS]</scope>
    <source>
        <tissue>Kidney</tissue>
    </source>
</reference>
<feature type="chain" id="PRO_0000214813" description="Sodium- and chloride-dependent transporter XTRP3B">
    <location>
        <begin position="1"/>
        <end position="635"/>
    </location>
</feature>
<feature type="topological domain" description="Cytoplasmic" evidence="1">
    <location>
        <begin position="1"/>
        <end position="56"/>
    </location>
</feature>
<feature type="transmembrane region" description="Helical; Name=1" evidence="1">
    <location>
        <begin position="57"/>
        <end position="77"/>
    </location>
</feature>
<feature type="topological domain" description="Extracellular" evidence="1">
    <location>
        <begin position="78"/>
        <end position="85"/>
    </location>
</feature>
<feature type="transmembrane region" description="Helical; Name=2" evidence="1">
    <location>
        <begin position="86"/>
        <end position="106"/>
    </location>
</feature>
<feature type="topological domain" description="Cytoplasmic" evidence="1">
    <location>
        <begin position="107"/>
        <end position="127"/>
    </location>
</feature>
<feature type="transmembrane region" description="Helical; Name=3" evidence="1">
    <location>
        <begin position="128"/>
        <end position="148"/>
    </location>
</feature>
<feature type="topological domain" description="Extracellular" evidence="1">
    <location>
        <begin position="149"/>
        <end position="208"/>
    </location>
</feature>
<feature type="transmembrane region" description="Helical; Name=4" evidence="1">
    <location>
        <begin position="209"/>
        <end position="229"/>
    </location>
</feature>
<feature type="topological domain" description="Cytoplasmic" evidence="1">
    <location>
        <begin position="230"/>
        <end position="237"/>
    </location>
</feature>
<feature type="transmembrane region" description="Helical; Name=5" evidence="1">
    <location>
        <begin position="238"/>
        <end position="258"/>
    </location>
</feature>
<feature type="topological domain" description="Extracellular" evidence="1">
    <location>
        <begin position="259"/>
        <end position="284"/>
    </location>
</feature>
<feature type="transmembrane region" description="Helical; Name=6" evidence="1">
    <location>
        <begin position="285"/>
        <end position="305"/>
    </location>
</feature>
<feature type="topological domain" description="Cytoplasmic" evidence="1">
    <location>
        <begin position="306"/>
        <end position="319"/>
    </location>
</feature>
<feature type="transmembrane region" description="Helical; Name=7" evidence="1">
    <location>
        <begin position="320"/>
        <end position="340"/>
    </location>
</feature>
<feature type="topological domain" description="Extracellular" evidence="1">
    <location>
        <begin position="341"/>
        <end position="432"/>
    </location>
</feature>
<feature type="transmembrane region" description="Helical; Name=8" evidence="1">
    <location>
        <begin position="433"/>
        <end position="453"/>
    </location>
</feature>
<feature type="topological domain" description="Cytoplasmic" evidence="1">
    <location>
        <begin position="454"/>
        <end position="474"/>
    </location>
</feature>
<feature type="transmembrane region" description="Helical; Name=9" evidence="1">
    <location>
        <begin position="475"/>
        <end position="495"/>
    </location>
</feature>
<feature type="topological domain" description="Extracellular" evidence="1">
    <location>
        <begin position="496"/>
        <end position="508"/>
    </location>
</feature>
<feature type="transmembrane region" description="Helical; Name=10" evidence="1">
    <location>
        <begin position="509"/>
        <end position="529"/>
    </location>
</feature>
<feature type="topological domain" description="Cytoplasmic" evidence="1">
    <location>
        <begin position="530"/>
        <end position="547"/>
    </location>
</feature>
<feature type="transmembrane region" description="Helical; Name=11" evidence="1">
    <location>
        <begin position="548"/>
        <end position="568"/>
    </location>
</feature>
<feature type="topological domain" description="Extracellular" evidence="1">
    <location>
        <begin position="569"/>
        <end position="597"/>
    </location>
</feature>
<feature type="transmembrane region" description="Helical; Name=12" evidence="1">
    <location>
        <begin position="598"/>
        <end position="618"/>
    </location>
</feature>
<feature type="topological domain" description="Cytoplasmic" evidence="1">
    <location>
        <begin position="619"/>
        <end position="635"/>
    </location>
</feature>
<feature type="region of interest" description="Disordered" evidence="2">
    <location>
        <begin position="1"/>
        <end position="38"/>
    </location>
</feature>
<feature type="glycosylation site" description="N-linked (GlcNAc...) asparagine" evidence="1">
    <location>
        <position position="174"/>
    </location>
</feature>
<feature type="glycosylation site" description="N-linked (GlcNAc...) asparagine" evidence="1">
    <location>
        <position position="400"/>
    </location>
</feature>
<feature type="sequence conflict" description="In Ref. 1; AAC27756, 2; BAE25668/BAE37885 and 4; AAH13484." evidence="7" ref="1 2 4">
    <original>N</original>
    <variation>S</variation>
    <location>
        <position position="85"/>
    </location>
</feature>